<dbReference type="EC" id="3.4.19.12" evidence="8 9 10"/>
<dbReference type="EMBL" id="AK056597">
    <property type="protein sequence ID" value="BAB71229.1"/>
    <property type="status" value="ALT_INIT"/>
    <property type="molecule type" value="mRNA"/>
</dbReference>
<dbReference type="EMBL" id="AK302581">
    <property type="protein sequence ID" value="BAG63836.1"/>
    <property type="molecule type" value="mRNA"/>
</dbReference>
<dbReference type="EMBL" id="AC096757">
    <property type="status" value="NOT_ANNOTATED_CDS"/>
    <property type="molecule type" value="Genomic_DNA"/>
</dbReference>
<dbReference type="EMBL" id="CH471056">
    <property type="protein sequence ID" value="EAX05045.1"/>
    <property type="molecule type" value="Genomic_DNA"/>
</dbReference>
<dbReference type="EMBL" id="CH471056">
    <property type="protein sequence ID" value="EAX05046.1"/>
    <property type="molecule type" value="Genomic_DNA"/>
</dbReference>
<dbReference type="EMBL" id="X68242">
    <property type="protein sequence ID" value="CAA48313.1"/>
    <property type="molecule type" value="mRNA"/>
</dbReference>
<dbReference type="EMBL" id="DQ427109">
    <property type="protein sequence ID" value="ABD72605.1"/>
    <property type="molecule type" value="Genomic_DNA"/>
</dbReference>
<dbReference type="EMBL" id="BC057242">
    <property type="protein sequence ID" value="AAH57242.2"/>
    <property type="status" value="ALT_SEQ"/>
    <property type="molecule type" value="mRNA"/>
</dbReference>
<dbReference type="EMBL" id="BC118572">
    <property type="protein sequence ID" value="AAI18573.1"/>
    <property type="molecule type" value="mRNA"/>
</dbReference>
<dbReference type="EMBL" id="BC118653">
    <property type="protein sequence ID" value="AAI18654.1"/>
    <property type="molecule type" value="mRNA"/>
</dbReference>
<dbReference type="EMBL" id="AB028969">
    <property type="protein sequence ID" value="BAA82998.2"/>
    <property type="status" value="ALT_SEQ"/>
    <property type="molecule type" value="mRNA"/>
</dbReference>
<dbReference type="EMBL" id="AL137460">
    <property type="protein sequence ID" value="CAB70748.1"/>
    <property type="molecule type" value="mRNA"/>
</dbReference>
<dbReference type="CCDS" id="CCDS3764.1">
    <molecule id="Q01804-4"/>
</dbReference>
<dbReference type="CCDS" id="CCDS47139.1">
    <molecule id="Q01804-3"/>
</dbReference>
<dbReference type="CCDS" id="CCDS93644.1">
    <molecule id="Q01804-1"/>
</dbReference>
<dbReference type="PIR" id="S30247">
    <property type="entry name" value="S30247"/>
</dbReference>
<dbReference type="PIR" id="T46403">
    <property type="entry name" value="T46403"/>
</dbReference>
<dbReference type="RefSeq" id="NP_001096123.1">
    <molecule id="Q01804-3"/>
    <property type="nucleotide sequence ID" value="NM_001102653.1"/>
</dbReference>
<dbReference type="RefSeq" id="NP_001352986.1">
    <molecule id="Q01804-1"/>
    <property type="nucleotide sequence ID" value="NM_001366057.1"/>
</dbReference>
<dbReference type="RefSeq" id="NP_059963.1">
    <molecule id="Q01804-4"/>
    <property type="nucleotide sequence ID" value="NM_017493.7"/>
</dbReference>
<dbReference type="RefSeq" id="XP_005263136.1">
    <property type="nucleotide sequence ID" value="XM_005263079.4"/>
</dbReference>
<dbReference type="SMR" id="Q01804"/>
<dbReference type="BioGRID" id="120112">
    <property type="interactions" value="694"/>
</dbReference>
<dbReference type="FunCoup" id="Q01804">
    <property type="interactions" value="2115"/>
</dbReference>
<dbReference type="IntAct" id="Q01804">
    <property type="interactions" value="99"/>
</dbReference>
<dbReference type="MINT" id="Q01804"/>
<dbReference type="STRING" id="9606.ENSP00000409279"/>
<dbReference type="MEROPS" id="C85.P01"/>
<dbReference type="GlyCosmos" id="Q01804">
    <property type="glycosylation" value="5 sites, 1 glycan"/>
</dbReference>
<dbReference type="GlyGen" id="Q01804">
    <property type="glycosylation" value="6 sites, 1 O-linked glycan (6 sites)"/>
</dbReference>
<dbReference type="iPTMnet" id="Q01804"/>
<dbReference type="PhosphoSitePlus" id="Q01804"/>
<dbReference type="BioMuta" id="OTUD4"/>
<dbReference type="DMDM" id="302393819"/>
<dbReference type="jPOST" id="Q01804"/>
<dbReference type="MassIVE" id="Q01804"/>
<dbReference type="PaxDb" id="9606-ENSP00000409279"/>
<dbReference type="PeptideAtlas" id="Q01804"/>
<dbReference type="ProteomicsDB" id="57988">
    <molecule id="Q01804-1"/>
</dbReference>
<dbReference type="ProteomicsDB" id="57990">
    <molecule id="Q01804-3"/>
</dbReference>
<dbReference type="ProteomicsDB" id="57991">
    <molecule id="Q01804-4"/>
</dbReference>
<dbReference type="Pumba" id="Q01804"/>
<dbReference type="Antibodypedia" id="27452">
    <property type="antibodies" value="186 antibodies from 32 providers"/>
</dbReference>
<dbReference type="DNASU" id="54726"/>
<dbReference type="Ensembl" id="ENST00000447906.8">
    <molecule id="Q01804-1"/>
    <property type="protein sequence ID" value="ENSP00000395487.2"/>
    <property type="gene ID" value="ENSG00000164164.17"/>
</dbReference>
<dbReference type="Ensembl" id="ENST00000454497.6">
    <molecule id="Q01804-3"/>
    <property type="protein sequence ID" value="ENSP00000409279.2"/>
    <property type="gene ID" value="ENSG00000164164.17"/>
</dbReference>
<dbReference type="Ensembl" id="ENST00000509620.6">
    <molecule id="Q01804-4"/>
    <property type="protein sequence ID" value="ENSP00000424192.2"/>
    <property type="gene ID" value="ENSG00000164164.17"/>
</dbReference>
<dbReference type="GeneID" id="54726"/>
<dbReference type="KEGG" id="hsa:54726"/>
<dbReference type="MANE-Select" id="ENST00000447906.8">
    <property type="protein sequence ID" value="ENSP00000395487.2"/>
    <property type="RefSeq nucleotide sequence ID" value="NM_001366057.1"/>
    <property type="RefSeq protein sequence ID" value="NP_001352986.1"/>
</dbReference>
<dbReference type="UCSC" id="uc003ika.5">
    <molecule id="Q01804-1"/>
    <property type="organism name" value="human"/>
</dbReference>
<dbReference type="AGR" id="HGNC:24949"/>
<dbReference type="CTD" id="54726"/>
<dbReference type="DisGeNET" id="54726"/>
<dbReference type="GeneCards" id="OTUD4"/>
<dbReference type="HGNC" id="HGNC:24949">
    <property type="gene designation" value="OTUD4"/>
</dbReference>
<dbReference type="HPA" id="ENSG00000164164">
    <property type="expression patterns" value="Low tissue specificity"/>
</dbReference>
<dbReference type="MalaCards" id="OTUD4"/>
<dbReference type="MIM" id="611744">
    <property type="type" value="gene"/>
</dbReference>
<dbReference type="neXtProt" id="NX_Q01804"/>
<dbReference type="OpenTargets" id="ENSG00000164164"/>
<dbReference type="PharmGKB" id="PA142671216"/>
<dbReference type="VEuPathDB" id="HostDB:ENSG00000164164"/>
<dbReference type="eggNOG" id="KOG2605">
    <property type="taxonomic scope" value="Eukaryota"/>
</dbReference>
<dbReference type="GeneTree" id="ENSGT00940000160512"/>
<dbReference type="HOGENOM" id="CLU_291170_0_0_1"/>
<dbReference type="InParanoid" id="Q01804"/>
<dbReference type="OMA" id="FFPPVWY"/>
<dbReference type="OrthoDB" id="10017659at2759"/>
<dbReference type="PAN-GO" id="Q01804">
    <property type="GO annotations" value="6 GO annotations based on evolutionary models"/>
</dbReference>
<dbReference type="PhylomeDB" id="Q01804"/>
<dbReference type="TreeFam" id="TF326812"/>
<dbReference type="PathwayCommons" id="Q01804"/>
<dbReference type="SignaLink" id="Q01804"/>
<dbReference type="BioGRID-ORCS" id="54726">
    <property type="hits" value="52 hits in 1194 CRISPR screens"/>
</dbReference>
<dbReference type="CD-CODE" id="232F8A39">
    <property type="entry name" value="P-body"/>
</dbReference>
<dbReference type="CD-CODE" id="DEE660B4">
    <property type="entry name" value="Stress granule"/>
</dbReference>
<dbReference type="ChiTaRS" id="OTUD4">
    <property type="organism name" value="human"/>
</dbReference>
<dbReference type="GeneWiki" id="OTUD4"/>
<dbReference type="GenomeRNAi" id="54726"/>
<dbReference type="Pharos" id="Q01804">
    <property type="development level" value="Tbio"/>
</dbReference>
<dbReference type="PRO" id="PR:Q01804"/>
<dbReference type="Proteomes" id="UP000005640">
    <property type="component" value="Chromosome 4"/>
</dbReference>
<dbReference type="RNAct" id="Q01804">
    <property type="molecule type" value="protein"/>
</dbReference>
<dbReference type="Bgee" id="ENSG00000164164">
    <property type="expression patterns" value="Expressed in middle frontal gyrus and 212 other cell types or tissues"/>
</dbReference>
<dbReference type="ExpressionAtlas" id="Q01804">
    <property type="expression patterns" value="baseline and differential"/>
</dbReference>
<dbReference type="GO" id="GO:0005737">
    <property type="term" value="C:cytoplasm"/>
    <property type="evidence" value="ECO:0000305"/>
    <property type="project" value="UniProt"/>
</dbReference>
<dbReference type="GO" id="GO:0005829">
    <property type="term" value="C:cytosol"/>
    <property type="evidence" value="ECO:0000314"/>
    <property type="project" value="HPA"/>
</dbReference>
<dbReference type="GO" id="GO:0005634">
    <property type="term" value="C:nucleus"/>
    <property type="evidence" value="ECO:0007669"/>
    <property type="project" value="UniProtKB-SubCell"/>
</dbReference>
<dbReference type="GO" id="GO:0004843">
    <property type="term" value="F:cysteine-type deubiquitinase activity"/>
    <property type="evidence" value="ECO:0000314"/>
    <property type="project" value="UniProtKB"/>
</dbReference>
<dbReference type="GO" id="GO:0061578">
    <property type="term" value="F:K63-linked deubiquitinase activity"/>
    <property type="evidence" value="ECO:0000314"/>
    <property type="project" value="UniProtKB"/>
</dbReference>
<dbReference type="GO" id="GO:0060090">
    <property type="term" value="F:molecular adaptor activity"/>
    <property type="evidence" value="ECO:0000314"/>
    <property type="project" value="UniProtKB"/>
</dbReference>
<dbReference type="GO" id="GO:0003723">
    <property type="term" value="F:RNA binding"/>
    <property type="evidence" value="ECO:0007005"/>
    <property type="project" value="UniProtKB"/>
</dbReference>
<dbReference type="GO" id="GO:0140374">
    <property type="term" value="P:antiviral innate immune response"/>
    <property type="evidence" value="ECO:0000314"/>
    <property type="project" value="UniProt"/>
</dbReference>
<dbReference type="GO" id="GO:0006307">
    <property type="term" value="P:DNA alkylation repair"/>
    <property type="evidence" value="ECO:0000314"/>
    <property type="project" value="UniProtKB"/>
</dbReference>
<dbReference type="GO" id="GO:2000660">
    <property type="term" value="P:negative regulation of interleukin-1-mediated signaling pathway"/>
    <property type="evidence" value="ECO:0000314"/>
    <property type="project" value="UniProtKB"/>
</dbReference>
<dbReference type="GO" id="GO:0034122">
    <property type="term" value="P:negative regulation of toll-like receptor signaling pathway"/>
    <property type="evidence" value="ECO:0000314"/>
    <property type="project" value="UniProtKB"/>
</dbReference>
<dbReference type="GO" id="GO:0035871">
    <property type="term" value="P:protein K11-linked deubiquitination"/>
    <property type="evidence" value="ECO:0000314"/>
    <property type="project" value="UniProt"/>
</dbReference>
<dbReference type="GO" id="GO:0071108">
    <property type="term" value="P:protein K48-linked deubiquitination"/>
    <property type="evidence" value="ECO:0000314"/>
    <property type="project" value="UniProtKB"/>
</dbReference>
<dbReference type="GO" id="GO:0070536">
    <property type="term" value="P:protein K63-linked deubiquitination"/>
    <property type="evidence" value="ECO:0000314"/>
    <property type="project" value="UniProtKB"/>
</dbReference>
<dbReference type="GO" id="GO:0006508">
    <property type="term" value="P:proteolysis"/>
    <property type="evidence" value="ECO:0007669"/>
    <property type="project" value="UniProtKB-KW"/>
</dbReference>
<dbReference type="GO" id="GO:1903093">
    <property type="term" value="P:regulation of protein K48-linked deubiquitination"/>
    <property type="evidence" value="ECO:0000314"/>
    <property type="project" value="UniProtKB"/>
</dbReference>
<dbReference type="CDD" id="cd22794">
    <property type="entry name" value="OTU_OTUD4"/>
    <property type="match status" value="1"/>
</dbReference>
<dbReference type="FunFam" id="3.90.70.80:FF:000013">
    <property type="entry name" value="OTU domain-containing protein 4"/>
    <property type="match status" value="1"/>
</dbReference>
<dbReference type="Gene3D" id="3.90.70.80">
    <property type="match status" value="1"/>
</dbReference>
<dbReference type="InterPro" id="IPR003323">
    <property type="entry name" value="OTU_dom"/>
</dbReference>
<dbReference type="InterPro" id="IPR038765">
    <property type="entry name" value="Papain-like_cys_pep_sf"/>
</dbReference>
<dbReference type="InterPro" id="IPR050704">
    <property type="entry name" value="Peptidase_C85-like"/>
</dbReference>
<dbReference type="PANTHER" id="PTHR12419">
    <property type="entry name" value="OTU DOMAIN CONTAINING PROTEIN"/>
    <property type="match status" value="1"/>
</dbReference>
<dbReference type="PANTHER" id="PTHR12419:SF9">
    <property type="entry name" value="OTU DOMAIN-CONTAINING PROTEIN 4"/>
    <property type="match status" value="1"/>
</dbReference>
<dbReference type="Pfam" id="PF02338">
    <property type="entry name" value="OTU"/>
    <property type="match status" value="1"/>
</dbReference>
<dbReference type="SUPFAM" id="SSF54001">
    <property type="entry name" value="Cysteine proteinases"/>
    <property type="match status" value="1"/>
</dbReference>
<dbReference type="PROSITE" id="PS50802">
    <property type="entry name" value="OTU"/>
    <property type="match status" value="1"/>
</dbReference>
<keyword id="KW-0007">Acetylation</keyword>
<keyword id="KW-0025">Alternative splicing</keyword>
<keyword id="KW-0963">Cytoplasm</keyword>
<keyword id="KW-0903">Direct protein sequencing</keyword>
<keyword id="KW-0378">Hydrolase</keyword>
<keyword id="KW-0391">Immunity</keyword>
<keyword id="KW-0399">Innate immunity</keyword>
<keyword id="KW-0539">Nucleus</keyword>
<keyword id="KW-0597">Phosphoprotein</keyword>
<keyword id="KW-0645">Protease</keyword>
<keyword id="KW-1267">Proteomics identification</keyword>
<keyword id="KW-1185">Reference proteome</keyword>
<keyword id="KW-0788">Thiol protease</keyword>
<keyword id="KW-0833">Ubl conjugation pathway</keyword>
<organism>
    <name type="scientific">Homo sapiens</name>
    <name type="common">Human</name>
    <dbReference type="NCBI Taxonomy" id="9606"/>
    <lineage>
        <taxon>Eukaryota</taxon>
        <taxon>Metazoa</taxon>
        <taxon>Chordata</taxon>
        <taxon>Craniata</taxon>
        <taxon>Vertebrata</taxon>
        <taxon>Euteleostomi</taxon>
        <taxon>Mammalia</taxon>
        <taxon>Eutheria</taxon>
        <taxon>Euarchontoglires</taxon>
        <taxon>Primates</taxon>
        <taxon>Haplorrhini</taxon>
        <taxon>Catarrhini</taxon>
        <taxon>Hominidae</taxon>
        <taxon>Homo</taxon>
    </lineage>
</organism>
<name>OTUD4_HUMAN</name>
<accession>Q01804</accession>
<accession>B4DYS4</accession>
<accession>Q147U2</accession>
<accession>Q1ZYK1</accession>
<accession>Q6PG39</accession>
<accession>Q96MQ5</accession>
<accession>Q9NT94</accession>
<accession>Q9UPV6</accession>
<comment type="function">
    <text evidence="8 9 10">Deubiquitinase which hydrolyzes the isopeptide bond between the ubiquitin C-terminus and the lysine epsilon-amino group of the target protein (PubMed:23827681, PubMed:25944111, PubMed:29395066). May negatively regulate inflammatory and pathogen recognition signaling in innate immune response. Upon phosphorylation at Ser-202 and Ser-204 residues, via IL-1 receptor and Toll-like receptor signaling pathway, specifically deubiquitinates 'Lys-63'-polyubiquitinated MYD88 adapter protein triggering down-regulation of NF-kappa-B-dependent transcription of inflammatory mediators (PubMed:29395066). Independently of the catalytic activity, acts as a scaffold for alternative deubiquitinases to assemble specific deubiquitinase-substrate complexes. Associates with USP7 and USP9X deubiquitinases to stabilize alkylation repair enzyme ALKBH3, thereby promoting the repair of alkylated DNA lesions (PubMed:25944111).</text>
</comment>
<comment type="catalytic activity">
    <reaction evidence="8 9 10">
        <text>Thiol-dependent hydrolysis of ester, thioester, amide, peptide and isopeptide bonds formed by the C-terminal Gly of ubiquitin (a 76-residue protein attached to proteins as an intracellular targeting signal).</text>
        <dbReference type="EC" id="3.4.19.12"/>
    </reaction>
</comment>
<comment type="activity regulation">
    <text evidence="10">Phosphorylation on Ser-202 and Ser-204 induces 'Lys-63'-specific deubiquitinase activity.</text>
</comment>
<comment type="subunit">
    <text evidence="9 10">Interacts with MYD88; the interaction is direct (PubMed:29395066). Interacts with ALKBH3; the interaction is direct (PubMed:25944111). Interacts with USP7; the interaction is direct (PubMed:25944111). Interacts with USP9X; the interaction is direct (PubMed:25944111).</text>
</comment>
<comment type="interaction">
    <interactant intactId="EBI-1054396">
        <id>Q01804</id>
    </interactant>
    <interactant intactId="EBI-371922">
        <id>Q96B26</id>
        <label>EXOSC8</label>
    </interactant>
    <organismsDiffer>false</organismsDiffer>
    <experiments>6</experiments>
</comment>
<comment type="interaction">
    <interactant intactId="EBI-1054396">
        <id>Q01804</id>
    </interactant>
    <interactant intactId="EBI-307352">
        <id>Q04864</id>
        <label>REL</label>
    </interactant>
    <organismsDiffer>false</organismsDiffer>
    <experiments>3</experiments>
</comment>
<comment type="interaction">
    <interactant intactId="EBI-1054396">
        <id>Q01804</id>
    </interactant>
    <interactant intactId="EBI-1057697">
        <id>P42224</id>
        <label>STAT1</label>
    </interactant>
    <organismsDiffer>false</organismsDiffer>
    <experiments>3</experiments>
</comment>
<comment type="interaction">
    <interactant intactId="EBI-1054396">
        <id>Q01804</id>
    </interactant>
    <interactant intactId="EBI-533224">
        <id>P15884</id>
        <label>TCF4</label>
    </interactant>
    <organismsDiffer>false</organismsDiffer>
    <experiments>3</experiments>
</comment>
<comment type="interaction">
    <interactant intactId="EBI-1054396">
        <id>Q01804</id>
    </interactant>
    <interactant intactId="EBI-12874016">
        <id>P11473-2</id>
        <label>VDR</label>
    </interactant>
    <organismsDiffer>false</organismsDiffer>
    <experiments>3</experiments>
</comment>
<comment type="interaction">
    <interactant intactId="EBI-1054396">
        <id>Q01804</id>
    </interactant>
    <interactant intactId="EBI-625509">
        <id>Q8N720</id>
        <label>ZNF655</label>
    </interactant>
    <organismsDiffer>false</organismsDiffer>
    <experiments>3</experiments>
</comment>
<comment type="subcellular location">
    <subcellularLocation>
        <location evidence="9">Cytoplasm</location>
    </subcellularLocation>
    <subcellularLocation>
        <location evidence="9">Nucleus</location>
    </subcellularLocation>
    <text evidence="9">Primarily cytoplasmic.</text>
</comment>
<comment type="alternative products">
    <event type="alternative splicing"/>
    <isoform>
        <id>Q01804-1</id>
        <name>1</name>
        <sequence type="displayed"/>
    </isoform>
    <isoform>
        <id>Q01804-5</id>
        <name>2</name>
        <sequence type="described" ref="VSP_038830 VSP_053825"/>
    </isoform>
    <isoform>
        <id>Q01804-3</id>
        <name>3</name>
        <sequence type="described" ref="VSP_038830"/>
    </isoform>
    <isoform>
        <id>Q01804-4</id>
        <name>4</name>
        <sequence type="described" ref="VSP_038830 VSP_021671"/>
    </isoform>
</comment>
<comment type="induction">
    <text evidence="6">By HIV-1 insertion.</text>
</comment>
<comment type="PTM">
    <text evidence="10">Phosphorylated on Ser-202 and Ser-204 likely by CSNK2A1-CSNK2A2 serine/threonine-protein kinase complex. Activates 'Lys-63'-specific deubiquitinase activity.</text>
</comment>
<comment type="miscellaneous">
    <molecule>Isoform 4</molecule>
    <text evidence="17">Predicted from a chimeric transcript isolated from HIV-1-infected cells. The premature stop may be due to intron retention.</text>
</comment>
<comment type="caution">
    <text evidence="8 9 10">When expressed in bacteria, recombinant OTUD4 specifically hydrolyzes 'Lys-48'-linked diubiquitin. The physiological relevance of this activity remains unknown (PubMed:23827681, PubMed:25944111, PubMed:29395066). In vivo deubiquitinates 'Lys-63'-linked ubiquitin chains (PubMed:29395066).</text>
</comment>
<comment type="sequence caution" evidence="17">
    <conflict type="miscellaneous discrepancy">
        <sequence resource="EMBL-CDS" id="AAH57242"/>
    </conflict>
    <text>Sequence of unknown origin in the N-terminal part.</text>
</comment>
<comment type="sequence caution" evidence="17">
    <conflict type="miscellaneous discrepancy">
        <sequence resource="EMBL-CDS" id="BAA82998"/>
    </conflict>
    <text>Intron retention.</text>
</comment>
<comment type="sequence caution" evidence="17">
    <conflict type="erroneous initiation">
        <sequence resource="EMBL-CDS" id="BAB71229"/>
    </conflict>
    <text>Truncated N-terminus.</text>
</comment>
<reference key="1">
    <citation type="journal article" date="2004" name="Nat. Genet.">
        <title>Complete sequencing and characterization of 21,243 full-length human cDNAs.</title>
        <authorList>
            <person name="Ota T."/>
            <person name="Suzuki Y."/>
            <person name="Nishikawa T."/>
            <person name="Otsuki T."/>
            <person name="Sugiyama T."/>
            <person name="Irie R."/>
            <person name="Wakamatsu A."/>
            <person name="Hayashi K."/>
            <person name="Sato H."/>
            <person name="Nagai K."/>
            <person name="Kimura K."/>
            <person name="Makita H."/>
            <person name="Sekine M."/>
            <person name="Obayashi M."/>
            <person name="Nishi T."/>
            <person name="Shibahara T."/>
            <person name="Tanaka T."/>
            <person name="Ishii S."/>
            <person name="Yamamoto J."/>
            <person name="Saito K."/>
            <person name="Kawai Y."/>
            <person name="Isono Y."/>
            <person name="Nakamura Y."/>
            <person name="Nagahari K."/>
            <person name="Murakami K."/>
            <person name="Yasuda T."/>
            <person name="Iwayanagi T."/>
            <person name="Wagatsuma M."/>
            <person name="Shiratori A."/>
            <person name="Sudo H."/>
            <person name="Hosoiri T."/>
            <person name="Kaku Y."/>
            <person name="Kodaira H."/>
            <person name="Kondo H."/>
            <person name="Sugawara M."/>
            <person name="Takahashi M."/>
            <person name="Kanda K."/>
            <person name="Yokoi T."/>
            <person name="Furuya T."/>
            <person name="Kikkawa E."/>
            <person name="Omura Y."/>
            <person name="Abe K."/>
            <person name="Kamihara K."/>
            <person name="Katsuta N."/>
            <person name="Sato K."/>
            <person name="Tanikawa M."/>
            <person name="Yamazaki M."/>
            <person name="Ninomiya K."/>
            <person name="Ishibashi T."/>
            <person name="Yamashita H."/>
            <person name="Murakawa K."/>
            <person name="Fujimori K."/>
            <person name="Tanai H."/>
            <person name="Kimata M."/>
            <person name="Watanabe M."/>
            <person name="Hiraoka S."/>
            <person name="Chiba Y."/>
            <person name="Ishida S."/>
            <person name="Ono Y."/>
            <person name="Takiguchi S."/>
            <person name="Watanabe S."/>
            <person name="Yosida M."/>
            <person name="Hotuta T."/>
            <person name="Kusano J."/>
            <person name="Kanehori K."/>
            <person name="Takahashi-Fujii A."/>
            <person name="Hara H."/>
            <person name="Tanase T.-O."/>
            <person name="Nomura Y."/>
            <person name="Togiya S."/>
            <person name="Komai F."/>
            <person name="Hara R."/>
            <person name="Takeuchi K."/>
            <person name="Arita M."/>
            <person name="Imose N."/>
            <person name="Musashino K."/>
            <person name="Yuuki H."/>
            <person name="Oshima A."/>
            <person name="Sasaki N."/>
            <person name="Aotsuka S."/>
            <person name="Yoshikawa Y."/>
            <person name="Matsunawa H."/>
            <person name="Ichihara T."/>
            <person name="Shiohata N."/>
            <person name="Sano S."/>
            <person name="Moriya S."/>
            <person name="Momiyama H."/>
            <person name="Satoh N."/>
            <person name="Takami S."/>
            <person name="Terashima Y."/>
            <person name="Suzuki O."/>
            <person name="Nakagawa S."/>
            <person name="Senoh A."/>
            <person name="Mizoguchi H."/>
            <person name="Goto Y."/>
            <person name="Shimizu F."/>
            <person name="Wakebe H."/>
            <person name="Hishigaki H."/>
            <person name="Watanabe T."/>
            <person name="Sugiyama A."/>
            <person name="Takemoto M."/>
            <person name="Kawakami B."/>
            <person name="Yamazaki M."/>
            <person name="Watanabe K."/>
            <person name="Kumagai A."/>
            <person name="Itakura S."/>
            <person name="Fukuzumi Y."/>
            <person name="Fujimori Y."/>
            <person name="Komiyama M."/>
            <person name="Tashiro H."/>
            <person name="Tanigami A."/>
            <person name="Fujiwara T."/>
            <person name="Ono T."/>
            <person name="Yamada K."/>
            <person name="Fujii Y."/>
            <person name="Ozaki K."/>
            <person name="Hirao M."/>
            <person name="Ohmori Y."/>
            <person name="Kawabata A."/>
            <person name="Hikiji T."/>
            <person name="Kobatake N."/>
            <person name="Inagaki H."/>
            <person name="Ikema Y."/>
            <person name="Okamoto S."/>
            <person name="Okitani R."/>
            <person name="Kawakami T."/>
            <person name="Noguchi S."/>
            <person name="Itoh T."/>
            <person name="Shigeta K."/>
            <person name="Senba T."/>
            <person name="Matsumura K."/>
            <person name="Nakajima Y."/>
            <person name="Mizuno T."/>
            <person name="Morinaga M."/>
            <person name="Sasaki M."/>
            <person name="Togashi T."/>
            <person name="Oyama M."/>
            <person name="Hata H."/>
            <person name="Watanabe M."/>
            <person name="Komatsu T."/>
            <person name="Mizushima-Sugano J."/>
            <person name="Satoh T."/>
            <person name="Shirai Y."/>
            <person name="Takahashi Y."/>
            <person name="Nakagawa K."/>
            <person name="Okumura K."/>
            <person name="Nagase T."/>
            <person name="Nomura N."/>
            <person name="Kikuchi H."/>
            <person name="Masuho Y."/>
            <person name="Yamashita R."/>
            <person name="Nakai K."/>
            <person name="Yada T."/>
            <person name="Nakamura Y."/>
            <person name="Ohara O."/>
            <person name="Isogai T."/>
            <person name="Sugano S."/>
        </authorList>
    </citation>
    <scope>NUCLEOTIDE SEQUENCE [LARGE SCALE MRNA] (ISOFORM 3)</scope>
    <source>
        <tissue>Testis</tissue>
        <tissue>Tongue</tissue>
    </source>
</reference>
<reference key="2">
    <citation type="journal article" date="2005" name="Nature">
        <title>Generation and annotation of the DNA sequences of human chromosomes 2 and 4.</title>
        <authorList>
            <person name="Hillier L.W."/>
            <person name="Graves T.A."/>
            <person name="Fulton R.S."/>
            <person name="Fulton L.A."/>
            <person name="Pepin K.H."/>
            <person name="Minx P."/>
            <person name="Wagner-McPherson C."/>
            <person name="Layman D."/>
            <person name="Wylie K."/>
            <person name="Sekhon M."/>
            <person name="Becker M.C."/>
            <person name="Fewell G.A."/>
            <person name="Delehaunty K.D."/>
            <person name="Miner T.L."/>
            <person name="Nash W.E."/>
            <person name="Kremitzki C."/>
            <person name="Oddy L."/>
            <person name="Du H."/>
            <person name="Sun H."/>
            <person name="Bradshaw-Cordum H."/>
            <person name="Ali J."/>
            <person name="Carter J."/>
            <person name="Cordes M."/>
            <person name="Harris A."/>
            <person name="Isak A."/>
            <person name="van Brunt A."/>
            <person name="Nguyen C."/>
            <person name="Du F."/>
            <person name="Courtney L."/>
            <person name="Kalicki J."/>
            <person name="Ozersky P."/>
            <person name="Abbott S."/>
            <person name="Armstrong J."/>
            <person name="Belter E.A."/>
            <person name="Caruso L."/>
            <person name="Cedroni M."/>
            <person name="Cotton M."/>
            <person name="Davidson T."/>
            <person name="Desai A."/>
            <person name="Elliott G."/>
            <person name="Erb T."/>
            <person name="Fronick C."/>
            <person name="Gaige T."/>
            <person name="Haakenson W."/>
            <person name="Haglund K."/>
            <person name="Holmes A."/>
            <person name="Harkins R."/>
            <person name="Kim K."/>
            <person name="Kruchowski S.S."/>
            <person name="Strong C.M."/>
            <person name="Grewal N."/>
            <person name="Goyea E."/>
            <person name="Hou S."/>
            <person name="Levy A."/>
            <person name="Martinka S."/>
            <person name="Mead K."/>
            <person name="McLellan M.D."/>
            <person name="Meyer R."/>
            <person name="Randall-Maher J."/>
            <person name="Tomlinson C."/>
            <person name="Dauphin-Kohlberg S."/>
            <person name="Kozlowicz-Reilly A."/>
            <person name="Shah N."/>
            <person name="Swearengen-Shahid S."/>
            <person name="Snider J."/>
            <person name="Strong J.T."/>
            <person name="Thompson J."/>
            <person name="Yoakum M."/>
            <person name="Leonard S."/>
            <person name="Pearman C."/>
            <person name="Trani L."/>
            <person name="Radionenko M."/>
            <person name="Waligorski J.E."/>
            <person name="Wang C."/>
            <person name="Rock S.M."/>
            <person name="Tin-Wollam A.-M."/>
            <person name="Maupin R."/>
            <person name="Latreille P."/>
            <person name="Wendl M.C."/>
            <person name="Yang S.-P."/>
            <person name="Pohl C."/>
            <person name="Wallis J.W."/>
            <person name="Spieth J."/>
            <person name="Bieri T.A."/>
            <person name="Berkowicz N."/>
            <person name="Nelson J.O."/>
            <person name="Osborne J."/>
            <person name="Ding L."/>
            <person name="Meyer R."/>
            <person name="Sabo A."/>
            <person name="Shotland Y."/>
            <person name="Sinha P."/>
            <person name="Wohldmann P.E."/>
            <person name="Cook L.L."/>
            <person name="Hickenbotham M.T."/>
            <person name="Eldred J."/>
            <person name="Williams D."/>
            <person name="Jones T.A."/>
            <person name="She X."/>
            <person name="Ciccarelli F.D."/>
            <person name="Izaurralde E."/>
            <person name="Taylor J."/>
            <person name="Schmutz J."/>
            <person name="Myers R.M."/>
            <person name="Cox D.R."/>
            <person name="Huang X."/>
            <person name="McPherson J.D."/>
            <person name="Mardis E.R."/>
            <person name="Clifton S.W."/>
            <person name="Warren W.C."/>
            <person name="Chinwalla A.T."/>
            <person name="Eddy S.R."/>
            <person name="Marra M.A."/>
            <person name="Ovcharenko I."/>
            <person name="Furey T.S."/>
            <person name="Miller W."/>
            <person name="Eichler E.E."/>
            <person name="Bork P."/>
            <person name="Suyama M."/>
            <person name="Torrents D."/>
            <person name="Waterston R.H."/>
            <person name="Wilson R.K."/>
        </authorList>
    </citation>
    <scope>NUCLEOTIDE SEQUENCE [LARGE SCALE GENOMIC DNA]</scope>
</reference>
<reference key="3">
    <citation type="submission" date="2005-09" db="EMBL/GenBank/DDBJ databases">
        <authorList>
            <person name="Mural R.J."/>
            <person name="Istrail S."/>
            <person name="Sutton G.G."/>
            <person name="Florea L."/>
            <person name="Halpern A.L."/>
            <person name="Mobarry C.M."/>
            <person name="Lippert R."/>
            <person name="Walenz B."/>
            <person name="Shatkay H."/>
            <person name="Dew I."/>
            <person name="Miller J.R."/>
            <person name="Flanigan M.J."/>
            <person name="Edwards N.J."/>
            <person name="Bolanos R."/>
            <person name="Fasulo D."/>
            <person name="Halldorsson B.V."/>
            <person name="Hannenhalli S."/>
            <person name="Turner R."/>
            <person name="Yooseph S."/>
            <person name="Lu F."/>
            <person name="Nusskern D.R."/>
            <person name="Shue B.C."/>
            <person name="Zheng X.H."/>
            <person name="Zhong F."/>
            <person name="Delcher A.L."/>
            <person name="Huson D.H."/>
            <person name="Kravitz S.A."/>
            <person name="Mouchard L."/>
            <person name="Reinert K."/>
            <person name="Remington K.A."/>
            <person name="Clark A.G."/>
            <person name="Waterman M.S."/>
            <person name="Eichler E.E."/>
            <person name="Adams M.D."/>
            <person name="Hunkapiller M.W."/>
            <person name="Myers E.W."/>
            <person name="Venter J.C."/>
        </authorList>
    </citation>
    <scope>NUCLEOTIDE SEQUENCE [LARGE SCALE GENOMIC DNA]</scope>
</reference>
<reference key="4">
    <citation type="journal article" date="1992" name="Nucleic Acids Res.">
        <title>HIV-1 promotor insertion revealed by selective detection of chimeric provirus-host gene transcripts.</title>
        <authorList>
            <person name="Raineri I."/>
            <person name="Senn H.-P."/>
        </authorList>
    </citation>
    <scope>NUCLEOTIDE SEQUENCE [MRNA] (ISOFORM 4)</scope>
    <scope>INDUCTION</scope>
</reference>
<reference key="5">
    <citation type="submission" date="2006-03" db="EMBL/GenBank/DDBJ databases">
        <authorList>
            <consortium name="SeattleSNPs variation discovery resource"/>
        </authorList>
    </citation>
    <scope>NUCLEOTIDE SEQUENCE [GENOMIC DNA]</scope>
    <scope>ALTERNATIVE SPLICING (ISOFORM 2)</scope>
    <scope>VARIANTS GLY-194 AND THR-216</scope>
</reference>
<reference key="6">
    <citation type="journal article" date="2004" name="Genome Res.">
        <title>The status, quality, and expansion of the NIH full-length cDNA project: the Mammalian Gene Collection (MGC).</title>
        <authorList>
            <consortium name="The MGC Project Team"/>
        </authorList>
    </citation>
    <scope>NUCLEOTIDE SEQUENCE [LARGE SCALE MRNA] (ISOFORM 3)</scope>
    <source>
        <tissue>Brain</tissue>
    </source>
</reference>
<reference key="7">
    <citation type="submission" date="2007-07" db="UniProtKB">
        <authorList>
            <person name="Bienvenut W.V."/>
            <person name="Heiserich L."/>
            <person name="Boulahbel H."/>
            <person name="Gottlieb E."/>
            <person name="Matallanas D."/>
            <person name="Cooper W.N."/>
            <person name="Kolch W."/>
        </authorList>
    </citation>
    <scope>PROTEIN SEQUENCE OF 1-19; 49-60; 250-266; 414-420; 436-447; 458-465; 701-708; 917-936; 945-970 AND 1000-1015</scope>
    <scope>ACETYLATION AT MET-1</scope>
    <scope>IDENTIFICATION BY MASS SPECTROMETRY</scope>
    <source>
        <tissue>Colon carcinoma</tissue>
        <tissue>Mammary carcinoma</tissue>
    </source>
</reference>
<reference key="8">
    <citation type="journal article" date="1999" name="DNA Res.">
        <title>Prediction of the coding sequences of unidentified human genes. XIV. The complete sequences of 100 new cDNA clones from brain which code for large proteins in vitro.</title>
        <authorList>
            <person name="Kikuno R."/>
            <person name="Nagase T."/>
            <person name="Ishikawa K."/>
            <person name="Hirosawa M."/>
            <person name="Miyajima N."/>
            <person name="Tanaka A."/>
            <person name="Kotani H."/>
            <person name="Nomura N."/>
            <person name="Ohara O."/>
        </authorList>
    </citation>
    <scope>NUCLEOTIDE SEQUENCE [LARGE SCALE MRNA] OF 709-1114 (ISOFORMS 1/2/3)</scope>
    <source>
        <tissue>Brain</tissue>
    </source>
</reference>
<reference key="9">
    <citation type="journal article" date="2007" name="BMC Genomics">
        <title>The full-ORF clone resource of the German cDNA consortium.</title>
        <authorList>
            <person name="Bechtel S."/>
            <person name="Rosenfelder H."/>
            <person name="Duda A."/>
            <person name="Schmidt C.P."/>
            <person name="Ernst U."/>
            <person name="Wellenreuther R."/>
            <person name="Mehrle A."/>
            <person name="Schuster C."/>
            <person name="Bahr A."/>
            <person name="Bloecker H."/>
            <person name="Heubner D."/>
            <person name="Hoerlein A."/>
            <person name="Michel G."/>
            <person name="Wedler H."/>
            <person name="Koehrer K."/>
            <person name="Ottenwaelder B."/>
            <person name="Poustka A."/>
            <person name="Wiemann S."/>
            <person name="Schupp I."/>
        </authorList>
    </citation>
    <scope>NUCLEOTIDE SEQUENCE [LARGE SCALE MRNA] OF 815-1114 (ISOFORMS 1/2/3)</scope>
    <source>
        <tissue>Testis</tissue>
    </source>
</reference>
<reference key="10">
    <citation type="journal article" date="2004" name="Anal. Chem.">
        <title>Robust phosphoproteomic profiling of tyrosine phosphorylation sites from human T cells using immobilized metal affinity chromatography and tandem mass spectrometry.</title>
        <authorList>
            <person name="Brill L.M."/>
            <person name="Salomon A.R."/>
            <person name="Ficarro S.B."/>
            <person name="Mukherji M."/>
            <person name="Stettler-Gill M."/>
            <person name="Peters E.C."/>
        </authorList>
    </citation>
    <scope>PHOSPHORYLATION [LARGE SCALE ANALYSIS] AT TYR-460</scope>
    <scope>IDENTIFICATION BY MASS SPECTROMETRY [LARGE SCALE ANALYSIS]</scope>
    <source>
        <tissue>Leukemic T-cell</tissue>
    </source>
</reference>
<reference key="11">
    <citation type="journal article" date="2006" name="Cell">
        <title>Global, in vivo, and site-specific phosphorylation dynamics in signaling networks.</title>
        <authorList>
            <person name="Olsen J.V."/>
            <person name="Blagoev B."/>
            <person name="Gnad F."/>
            <person name="Macek B."/>
            <person name="Kumar C."/>
            <person name="Mortensen P."/>
            <person name="Mann M."/>
        </authorList>
    </citation>
    <scope>IDENTIFICATION BY MASS SPECTROMETRY [LARGE SCALE ANALYSIS]</scope>
    <source>
        <tissue>Cervix carcinoma</tissue>
    </source>
</reference>
<reference key="12">
    <citation type="journal article" date="2006" name="Nat. Biotechnol.">
        <title>A probability-based approach for high-throughput protein phosphorylation analysis and site localization.</title>
        <authorList>
            <person name="Beausoleil S.A."/>
            <person name="Villen J."/>
            <person name="Gerber S.A."/>
            <person name="Rush J."/>
            <person name="Gygi S.P."/>
        </authorList>
    </citation>
    <scope>PHOSPHORYLATION [LARGE SCALE ANALYSIS] AT SER-1006</scope>
    <scope>IDENTIFICATION BY MASS SPECTROMETRY [LARGE SCALE ANALYSIS]</scope>
    <source>
        <tissue>Cervix carcinoma</tissue>
    </source>
</reference>
<reference key="13">
    <citation type="journal article" date="2008" name="Proc. Natl. Acad. Sci. U.S.A.">
        <title>A quantitative atlas of mitotic phosphorylation.</title>
        <authorList>
            <person name="Dephoure N."/>
            <person name="Zhou C."/>
            <person name="Villen J."/>
            <person name="Beausoleil S.A."/>
            <person name="Bakalarski C.E."/>
            <person name="Elledge S.J."/>
            <person name="Gygi S.P."/>
        </authorList>
    </citation>
    <scope>PHOSPHORYLATION [LARGE SCALE ANALYSIS] AT SER-443; SER-1006; SER-1023 AND SER-1024</scope>
    <scope>IDENTIFICATION BY MASS SPECTROMETRY [LARGE SCALE ANALYSIS]</scope>
    <source>
        <tissue>Cervix carcinoma</tissue>
    </source>
</reference>
<reference key="14">
    <citation type="journal article" date="2009" name="Anal. Chem.">
        <title>Lys-N and trypsin cover complementary parts of the phosphoproteome in a refined SCX-based approach.</title>
        <authorList>
            <person name="Gauci S."/>
            <person name="Helbig A.O."/>
            <person name="Slijper M."/>
            <person name="Krijgsveld J."/>
            <person name="Heck A.J."/>
            <person name="Mohammed S."/>
        </authorList>
    </citation>
    <scope>IDENTIFICATION BY MASS SPECTROMETRY [LARGE SCALE ANALYSIS]</scope>
</reference>
<reference key="15">
    <citation type="journal article" date="2009" name="Sci. Signal.">
        <title>Quantitative phosphoproteomic analysis of T cell receptor signaling reveals system-wide modulation of protein-protein interactions.</title>
        <authorList>
            <person name="Mayya V."/>
            <person name="Lundgren D.H."/>
            <person name="Hwang S.-I."/>
            <person name="Rezaul K."/>
            <person name="Wu L."/>
            <person name="Eng J.K."/>
            <person name="Rodionov V."/>
            <person name="Han D.K."/>
        </authorList>
    </citation>
    <scope>PHOSPHORYLATION [LARGE SCALE ANALYSIS] AT SER-443; SER-1006; SER-1023 AND SER-1024</scope>
    <scope>IDENTIFICATION BY MASS SPECTROMETRY [LARGE SCALE ANALYSIS]</scope>
    <source>
        <tissue>Leukemic T-cell</tissue>
    </source>
</reference>
<reference key="16">
    <citation type="journal article" date="2010" name="Sci. Signal.">
        <title>Quantitative phosphoproteomics reveals widespread full phosphorylation site occupancy during mitosis.</title>
        <authorList>
            <person name="Olsen J.V."/>
            <person name="Vermeulen M."/>
            <person name="Santamaria A."/>
            <person name="Kumar C."/>
            <person name="Miller M.L."/>
            <person name="Jensen L.J."/>
            <person name="Gnad F."/>
            <person name="Cox J."/>
            <person name="Jensen T.S."/>
            <person name="Nigg E.A."/>
            <person name="Brunak S."/>
            <person name="Mann M."/>
        </authorList>
    </citation>
    <scope>PHOSPHORYLATION [LARGE SCALE ANALYSIS] AT SER-893; SER-900; SER-1023 AND SER-1024</scope>
    <scope>IDENTIFICATION BY MASS SPECTROMETRY [LARGE SCALE ANALYSIS]</scope>
    <source>
        <tissue>Cervix carcinoma</tissue>
    </source>
</reference>
<reference key="17">
    <citation type="journal article" date="2011" name="BMC Syst. Biol.">
        <title>Initial characterization of the human central proteome.</title>
        <authorList>
            <person name="Burkard T.R."/>
            <person name="Planyavsky M."/>
            <person name="Kaupe I."/>
            <person name="Breitwieser F.P."/>
            <person name="Buerckstuemmer T."/>
            <person name="Bennett K.L."/>
            <person name="Superti-Furga G."/>
            <person name="Colinge J."/>
        </authorList>
    </citation>
    <scope>IDENTIFICATION BY MASS SPECTROMETRY [LARGE SCALE ANALYSIS]</scope>
</reference>
<reference key="18">
    <citation type="journal article" date="2011" name="Sci. Signal.">
        <title>System-wide temporal characterization of the proteome and phosphoproteome of human embryonic stem cell differentiation.</title>
        <authorList>
            <person name="Rigbolt K.T."/>
            <person name="Prokhorova T.A."/>
            <person name="Akimov V."/>
            <person name="Henningsen J."/>
            <person name="Johansen P.T."/>
            <person name="Kratchmarova I."/>
            <person name="Kassem M."/>
            <person name="Mann M."/>
            <person name="Olsen J.V."/>
            <person name="Blagoev B."/>
        </authorList>
    </citation>
    <scope>PHOSPHORYLATION [LARGE SCALE ANALYSIS] AT SER-893 AND SER-1006</scope>
    <scope>IDENTIFICATION BY MASS SPECTROMETRY [LARGE SCALE ANALYSIS]</scope>
</reference>
<reference key="19">
    <citation type="journal article" date="2012" name="Mol. Cell. Proteomics">
        <title>Comparative large-scale characterisation of plant vs. mammal proteins reveals similar and idiosyncratic N-alpha acetylation features.</title>
        <authorList>
            <person name="Bienvenut W.V."/>
            <person name="Sumpton D."/>
            <person name="Martinez A."/>
            <person name="Lilla S."/>
            <person name="Espagne C."/>
            <person name="Meinnel T."/>
            <person name="Giglione C."/>
        </authorList>
    </citation>
    <scope>ACETYLATION [LARGE SCALE ANALYSIS] AT MET-1</scope>
    <scope>IDENTIFICATION BY MASS SPECTROMETRY [LARGE SCALE ANALYSIS]</scope>
</reference>
<reference key="20">
    <citation type="journal article" date="2012" name="Proc. Natl. Acad. Sci. U.S.A.">
        <title>N-terminal acetylome analyses and functional insights of the N-terminal acetyltransferase NatB.</title>
        <authorList>
            <person name="Van Damme P."/>
            <person name="Lasa M."/>
            <person name="Polevoda B."/>
            <person name="Gazquez C."/>
            <person name="Elosegui-Artola A."/>
            <person name="Kim D.S."/>
            <person name="De Juan-Pardo E."/>
            <person name="Demeyer K."/>
            <person name="Hole K."/>
            <person name="Larrea E."/>
            <person name="Timmerman E."/>
            <person name="Prieto J."/>
            <person name="Arnesen T."/>
            <person name="Sherman F."/>
            <person name="Gevaert K."/>
            <person name="Aldabe R."/>
        </authorList>
    </citation>
    <scope>ACETYLATION [LARGE SCALE ANALYSIS] AT MET-1</scope>
    <scope>IDENTIFICATION BY MASS SPECTROMETRY [LARGE SCALE ANALYSIS]</scope>
</reference>
<reference key="21">
    <citation type="journal article" date="2013" name="Cell">
        <title>OTU deubiquitinases reveal mechanisms of linkage specificity and enable ubiquitin chain restriction analysis.</title>
        <authorList>
            <person name="Mevissen T.E."/>
            <person name="Hospenthal M.K."/>
            <person name="Geurink P.P."/>
            <person name="Elliott P.R."/>
            <person name="Akutsu M."/>
            <person name="Arnaudo N."/>
            <person name="Ekkebus R."/>
            <person name="Kulathu Y."/>
            <person name="Wauer T."/>
            <person name="El Oualid F."/>
            <person name="Freund S.M."/>
            <person name="Ovaa H."/>
            <person name="Komander D."/>
        </authorList>
    </citation>
    <scope>FUNCTION</scope>
    <scope>CATALYTIC ACTIVITY</scope>
</reference>
<reference key="22">
    <citation type="journal article" date="2013" name="J. Proteome Res.">
        <title>Toward a comprehensive characterization of a human cancer cell phosphoproteome.</title>
        <authorList>
            <person name="Zhou H."/>
            <person name="Di Palma S."/>
            <person name="Preisinger C."/>
            <person name="Peng M."/>
            <person name="Polat A.N."/>
            <person name="Heck A.J."/>
            <person name="Mohammed S."/>
        </authorList>
    </citation>
    <scope>PHOSPHORYLATION [LARGE SCALE ANALYSIS] AT SER-341; SER-443; SER-546; SER-893; SER-1014; SER-1023; SER-1024 AND SER-1049</scope>
    <scope>IDENTIFICATION BY MASS SPECTROMETRY [LARGE SCALE ANALYSIS]</scope>
    <source>
        <tissue>Cervix carcinoma</tissue>
        <tissue>Erythroleukemia</tissue>
    </source>
</reference>
<reference key="23">
    <citation type="journal article" date="2014" name="J. Proteomics">
        <title>An enzyme assisted RP-RPLC approach for in-depth analysis of human liver phosphoproteome.</title>
        <authorList>
            <person name="Bian Y."/>
            <person name="Song C."/>
            <person name="Cheng K."/>
            <person name="Dong M."/>
            <person name="Wang F."/>
            <person name="Huang J."/>
            <person name="Sun D."/>
            <person name="Wang L."/>
            <person name="Ye M."/>
            <person name="Zou H."/>
        </authorList>
    </citation>
    <scope>PHOSPHORYLATION [LARGE SCALE ANALYSIS] AT SER-443</scope>
    <scope>IDENTIFICATION BY MASS SPECTROMETRY [LARGE SCALE ANALYSIS]</scope>
    <source>
        <tissue>Liver</tissue>
    </source>
</reference>
<reference key="24">
    <citation type="journal article" date="2013" name="N. Engl. J. Med.">
        <title>Ataxia, dementia, and hypogonadotropism caused by disordered ubiquitination.</title>
        <authorList>
            <person name="Margolin D.H."/>
            <person name="Kousi M."/>
            <person name="Chan Y.M."/>
            <person name="Lim E.T."/>
            <person name="Schmahmann J.D."/>
            <person name="Hadjivassiliou M."/>
            <person name="Hall J.E."/>
            <person name="Adam I."/>
            <person name="Dwyer A."/>
            <person name="Plummer L."/>
            <person name="Aldrin S.V."/>
            <person name="O'Rourke J."/>
            <person name="Kirby A."/>
            <person name="Lage K."/>
            <person name="Milunsky A."/>
            <person name="Milunsky J.M."/>
            <person name="Chan J."/>
            <person name="Hedley-Whyte E.T."/>
            <person name="Daly M.J."/>
            <person name="Katsanis N."/>
            <person name="Seminara S.B."/>
        </authorList>
    </citation>
    <scope>VARIANT VAL-398</scope>
</reference>
<reference key="25">
    <citation type="journal article" date="2015" name="EMBO J.">
        <title>Noncanonical regulation of alkylation damage resistance by the OTUD4 deubiquitinase.</title>
        <authorList>
            <person name="Zhao Y."/>
            <person name="Majid M.C."/>
            <person name="Soll J.M."/>
            <person name="Brickner J.R."/>
            <person name="Dango S."/>
            <person name="Mosammaparast N."/>
        </authorList>
    </citation>
    <scope>FUNCTION</scope>
    <scope>CATALYTIC ACTIVITY</scope>
    <scope>INTERACTION WITH ALKBH3; USP7 AND USP9X</scope>
    <scope>SUBCELLULAR LOCATION</scope>
    <scope>ACTIVE SITE</scope>
    <scope>MUTAGENESIS OF CYS-45 AND 181-VAL--SER-550</scope>
</reference>
<reference key="26">
    <citation type="journal article" date="2018" name="Mol. Cell">
        <title>OTUD4 Is a Phospho-Activated K63 Deubiquitinase that Regulates MyD88-Dependent Signaling.</title>
        <authorList>
            <person name="Zhao Y."/>
            <person name="Mudge M.C."/>
            <person name="Soll J.M."/>
            <person name="Rodrigues R.B."/>
            <person name="Byrum A.K."/>
            <person name="Schwarzkopf E.A."/>
            <person name="Bradstreet T.R."/>
            <person name="Gygi S.P."/>
            <person name="Edelson B.T."/>
            <person name="Mosammaparast N."/>
        </authorList>
    </citation>
    <scope>FUNCTION</scope>
    <scope>CATALYTIC ACTIVITY</scope>
    <scope>ACTIVITY REGULATION</scope>
    <scope>INTERACTION WITH MYD88</scope>
    <scope>PHOSPHORYLATION AT TYR-120; SER-126; SER-128; THR-131; SER-166; SER-199; SER-202 AND SER-204</scope>
    <scope>IDENTIFICATION BY MASS SPECTROMETRY</scope>
    <scope>ACTIVE SITE</scope>
    <scope>MUTAGENESIS OF CYS-45; SER-202; SER-204; 273-LYS--ASP-275 AND ALA-279</scope>
</reference>
<feature type="chain" id="PRO_0000083979" description="OTU domain-containing protein 4">
    <location>
        <begin position="1"/>
        <end position="1114"/>
    </location>
</feature>
<feature type="domain" description="OTU" evidence="4 10">
    <location>
        <begin position="34"/>
        <end position="155"/>
    </location>
</feature>
<feature type="region of interest" description="Disordered" evidence="5">
    <location>
        <begin position="1"/>
        <end position="22"/>
    </location>
</feature>
<feature type="region of interest" description="Cys-loop" evidence="2">
    <location>
        <begin position="39"/>
        <end position="45"/>
    </location>
</feature>
<feature type="region of interest" description="Variable-loop" evidence="2">
    <location>
        <begin position="94"/>
        <end position="104"/>
    </location>
</feature>
<feature type="region of interest" description="His-loop" evidence="2">
    <location>
        <begin position="143"/>
        <end position="148"/>
    </location>
</feature>
<feature type="region of interest" description="Disordered" evidence="5">
    <location>
        <begin position="323"/>
        <end position="449"/>
    </location>
</feature>
<feature type="region of interest" description="Disordered" evidence="5">
    <location>
        <begin position="472"/>
        <end position="567"/>
    </location>
</feature>
<feature type="region of interest" description="Disordered" evidence="5">
    <location>
        <begin position="911"/>
        <end position="1114"/>
    </location>
</feature>
<feature type="compositionally biased region" description="Gly residues" evidence="5">
    <location>
        <begin position="8"/>
        <end position="17"/>
    </location>
</feature>
<feature type="compositionally biased region" description="Low complexity" evidence="5">
    <location>
        <begin position="392"/>
        <end position="404"/>
    </location>
</feature>
<feature type="compositionally biased region" description="Basic and acidic residues" evidence="5">
    <location>
        <begin position="420"/>
        <end position="435"/>
    </location>
</feature>
<feature type="compositionally biased region" description="Low complexity" evidence="5">
    <location>
        <begin position="474"/>
        <end position="487"/>
    </location>
</feature>
<feature type="compositionally biased region" description="Basic and acidic residues" evidence="5">
    <location>
        <begin position="496"/>
        <end position="529"/>
    </location>
</feature>
<feature type="compositionally biased region" description="Basic and acidic residues" evidence="5">
    <location>
        <begin position="913"/>
        <end position="922"/>
    </location>
</feature>
<feature type="compositionally biased region" description="Basic and acidic residues" evidence="5">
    <location>
        <begin position="969"/>
        <end position="1000"/>
    </location>
</feature>
<feature type="compositionally biased region" description="Polar residues" evidence="5">
    <location>
        <begin position="1039"/>
        <end position="1048"/>
    </location>
</feature>
<feature type="compositionally biased region" description="Basic and acidic residues" evidence="5">
    <location>
        <begin position="1067"/>
        <end position="1086"/>
    </location>
</feature>
<feature type="compositionally biased region" description="Basic and acidic residues" evidence="5">
    <location>
        <begin position="1096"/>
        <end position="1114"/>
    </location>
</feature>
<feature type="active site" evidence="3">
    <location>
        <position position="42"/>
    </location>
</feature>
<feature type="active site" description="Nucleophile" evidence="8 9 10">
    <location>
        <position position="45"/>
    </location>
</feature>
<feature type="active site" evidence="2">
    <location>
        <position position="148"/>
    </location>
</feature>
<feature type="modified residue" description="N-acetylmethionine" evidence="12 25 26">
    <location>
        <position position="1"/>
    </location>
</feature>
<feature type="modified residue" description="Phosphotyrosine" evidence="10">
    <location>
        <position position="120"/>
    </location>
</feature>
<feature type="modified residue" description="Phosphoserine" evidence="10">
    <location>
        <position position="126"/>
    </location>
</feature>
<feature type="modified residue" description="Phosphoserine" evidence="10">
    <location>
        <position position="128"/>
    </location>
</feature>
<feature type="modified residue" description="Phosphothreonine" evidence="10">
    <location>
        <position position="131"/>
    </location>
</feature>
<feature type="modified residue" description="Phosphoserine" evidence="10">
    <location>
        <position position="166"/>
    </location>
</feature>
<feature type="modified residue" description="Phosphoserine" evidence="10">
    <location>
        <position position="199"/>
    </location>
</feature>
<feature type="modified residue" description="Phosphoserine" evidence="10">
    <location>
        <position position="202"/>
    </location>
</feature>
<feature type="modified residue" description="Phosphoserine" evidence="10">
    <location>
        <position position="204"/>
    </location>
</feature>
<feature type="modified residue" description="Phosphoserine" evidence="27">
    <location>
        <position position="341"/>
    </location>
</feature>
<feature type="modified residue" description="Phosphotyrosine" evidence="1">
    <location>
        <position position="439"/>
    </location>
</feature>
<feature type="modified residue" description="Phosphoserine" evidence="21 22 27 28">
    <location>
        <position position="443"/>
    </location>
</feature>
<feature type="modified residue" description="Phosphotyrosine" evidence="19">
    <location>
        <position position="460"/>
    </location>
</feature>
<feature type="modified residue" description="Phosphoserine" evidence="27">
    <location>
        <position position="546"/>
    </location>
</feature>
<feature type="modified residue" description="Phosphoserine" evidence="23 24 27">
    <location>
        <position position="893"/>
    </location>
</feature>
<feature type="modified residue" description="Phosphoserine" evidence="23">
    <location>
        <position position="900"/>
    </location>
</feature>
<feature type="modified residue" description="Phosphoserine" evidence="20 21 22 24">
    <location>
        <position position="1006"/>
    </location>
</feature>
<feature type="modified residue" description="Phosphoserine" evidence="1">
    <location>
        <position position="1011"/>
    </location>
</feature>
<feature type="modified residue" description="Phosphoserine" evidence="27">
    <location>
        <position position="1014"/>
    </location>
</feature>
<feature type="modified residue" description="Phosphoserine" evidence="21 22 23 27">
    <location>
        <position position="1023"/>
    </location>
</feature>
<feature type="modified residue" description="Phosphoserine" evidence="21 22 23 27">
    <location>
        <position position="1024"/>
    </location>
</feature>
<feature type="modified residue" description="Phosphoserine" evidence="27">
    <location>
        <position position="1049"/>
    </location>
</feature>
<feature type="splice variant" id="VSP_038830" description="In isoform 2, isoform 3 and isoform 4." evidence="14 15 16">
    <location>
        <begin position="1"/>
        <end position="65"/>
    </location>
</feature>
<feature type="splice variant" id="VSP_021671" description="In isoform 4." evidence="15">
    <location>
        <begin position="211"/>
        <end position="1114"/>
    </location>
</feature>
<feature type="splice variant" id="VSP_053825" description="In isoform 2." evidence="17">
    <location>
        <position position="231"/>
    </location>
</feature>
<feature type="sequence variant" id="VAR_029377" description="In dbSNP:rs36225458." evidence="11">
    <original>A</original>
    <variation>G</variation>
    <location>
        <position position="194"/>
    </location>
</feature>
<feature type="sequence variant" id="VAR_038848" description="In dbSNP:rs36225838." evidence="11">
    <original>A</original>
    <variation>T</variation>
    <location>
        <position position="216"/>
    </location>
</feature>
<feature type="sequence variant" id="VAR_070050" description="Found in patients with cerebellar ataxia and hypogonadotropic hypogonadism; uncertain significance; dbSNP:rs148857745." evidence="7">
    <original>G</original>
    <variation>V</variation>
    <location>
        <position position="398"/>
    </location>
</feature>
<feature type="mutagenesis site" description="Abolishes 'Lys-48'- and 'Lys-63'-specific deubiquitinase activity. Impairs 'Lys-63'-specific deubiquitinase activity toward MYD88 substrate." evidence="8 9 10">
    <original>C</original>
    <variation>A</variation>
    <location>
        <position position="45"/>
    </location>
</feature>
<feature type="mutagenesis site" description="Abolishes 'Lys-48'- and 'Lys-63'-specific deubiquitinase activity." evidence="10">
    <original>C</original>
    <variation>S</variation>
    <location>
        <position position="45"/>
    </location>
</feature>
<feature type="mutagenesis site" description="Abolishes interaction with USP7 and USP9X deubiquitinases." evidence="9">
    <location>
        <begin position="181"/>
        <end position="550"/>
    </location>
</feature>
<feature type="mutagenesis site" description="Decreases 'Lys-63'-specific deubiquitinase activity. Loss of 'Lys-63'-specific deubiquitinase activity; when associated with A-204." evidence="10">
    <original>S</original>
    <variation>A</variation>
    <location>
        <position position="202"/>
    </location>
</feature>
<feature type="mutagenesis site" description="Loss of 'Lys-63'-specific deubiquitinase activity; when associated with A-204." evidence="10">
    <original>S</original>
    <variation>A</variation>
    <location>
        <position position="204"/>
    </location>
</feature>
<feature type="mutagenesis site" description="Abolishes 'Lys-63'-specific deubiquitinase activity by impairing the affinity for 'Lys-63'-linked ubiquitin chain substrate." evidence="10">
    <original>KRD</original>
    <variation>AAA</variation>
    <location>
        <begin position="273"/>
        <end position="275"/>
    </location>
</feature>
<feature type="mutagenesis site" description="Abolishes 'Lys-63'-specific deubiquitinase activity by impairing the affinity for 'Lys-63'-linked ubiquitin chain substrate." evidence="10">
    <original>A</original>
    <variation>R</variation>
    <location>
        <position position="279"/>
    </location>
</feature>
<feature type="sequence conflict" description="In Ref. 1; BAB71229." evidence="17" ref="1">
    <original>S</original>
    <variation>P</variation>
    <location>
        <position position="809"/>
    </location>
</feature>
<feature type="sequence conflict" description="In Ref. 9; CAB70748." evidence="17" ref="9">
    <original>A</original>
    <variation>S</variation>
    <location>
        <position position="915"/>
    </location>
</feature>
<sequence>MEAAVGVPDGGDQGGAGPREDATPMDAYLRKLGLYRKLVAKDGSCLFRAVAEQVLHSQSRHVEVRMACIHYLRENREKFEAFIEGSFEEYLKRLENPQEWVGQVEISALSLMYRKDFIIYREPNVSPSQVTENNFPEKVLLCFSNGNHYDIVYPIKYKESSAMCQSLLYELLYEKVFKTDVSKIVMELDTLEVADEDNSEISDSEDDSCKSKTAAAAADVNGFKPLSGNEQLKNNGNSTSLPLSRKVLKSLNPAVYRNVEYEIWLKSKQAQQKRDYSIAAGLQYEVGDKCQVRLDHNGKFLNADVQGIHSENGPVLVEELGKKHTSKNLKAPPPESWNTVSGKKMKKPSTSGQNFHSDVDYRGPKNPSKPIKAPSALPPRLQHPSGVRQHAFSSHSSGSQSQKFSSEHKNLSRTPSQIIRKPDRERVEDFDHTSRESNYFGLSPEERREKQAIEESRLLYEIQNRDEQAFPALSSSSVNQSASQSSNPCVQRKSSHVGDRKGSRRRMDTEERKDKDSIHGHSQLDKRPEPSTLENITDDKYATVSSPSKSKKLECPSPAEQKPAEHVSLSNPAPLLVSPEVHLTPAVPSLPATVPAWPSEPTTFGPTGVPAPIPVLSVTQTLTTGPDSAVSQAHLTPSPVPVSIQAVNQPLMPLPQTLSLYQDPLYPGFPCNEKGDRAIVPPYSLCQTGEDLPKDKNILRFFFNLGVKAYSCPMWAPHSYLYPLHQAYLAACRMYPKVPVPVYPHNPWFQEAPAAQNESDCTCTDAHFPMQTEASVNGQMPQPEIGPPTFSSPLVIPPSQVSESHGQLSYQADLESETPGQLLHADYEESLSGKNMFPQPSFGPNPFLGPVPIAPPFFPHVWYGYPFQGFIENPVMRQNIVLPSDEKGELDLSLENLDLSKDCGSVSTVDEFPEARGEHVHSLPEASVSSKPDEGRTEQSSQTRKADTALASIPPVAEGKAHPPTQILNRERETVPVELEPKRTIQSLKEKTEKVKDPKTAADVVSPGANSVDSRVQRPKEESSEDENEVSNILRSGRSKQFYNQTYGSRKYKSDWGYSGRGGYQHVRSEESWKGQPSRSRDEGYQYHRNVRGRPFRGDRRRSGMGDGHRGQHT</sequence>
<protein>
    <recommendedName>
        <fullName>OTU domain-containing protein 4</fullName>
        <ecNumber evidence="8 9 10">3.4.19.12</ecNumber>
    </recommendedName>
    <alternativeName>
        <fullName evidence="15">HIV-1-induced protein HIN-1</fullName>
    </alternativeName>
</protein>
<proteinExistence type="evidence at protein level"/>
<evidence type="ECO:0000250" key="1">
    <source>
        <dbReference type="UniProtKB" id="B2RRE7"/>
    </source>
</evidence>
<evidence type="ECO:0000250" key="2">
    <source>
        <dbReference type="UniProtKB" id="Q5VVQ6"/>
    </source>
</evidence>
<evidence type="ECO:0000250" key="3">
    <source>
        <dbReference type="UniProtKB" id="Q96FW1"/>
    </source>
</evidence>
<evidence type="ECO:0000255" key="4">
    <source>
        <dbReference type="PROSITE-ProRule" id="PRU00139"/>
    </source>
</evidence>
<evidence type="ECO:0000256" key="5">
    <source>
        <dbReference type="SAM" id="MobiDB-lite"/>
    </source>
</evidence>
<evidence type="ECO:0000269" key="6">
    <source>
    </source>
</evidence>
<evidence type="ECO:0000269" key="7">
    <source>
    </source>
</evidence>
<evidence type="ECO:0000269" key="8">
    <source>
    </source>
</evidence>
<evidence type="ECO:0000269" key="9">
    <source>
    </source>
</evidence>
<evidence type="ECO:0000269" key="10">
    <source>
    </source>
</evidence>
<evidence type="ECO:0000269" key="11">
    <source ref="5"/>
</evidence>
<evidence type="ECO:0000269" key="12">
    <source ref="7"/>
</evidence>
<evidence type="ECO:0000303" key="13">
    <source>
    </source>
</evidence>
<evidence type="ECO:0000303" key="14">
    <source>
    </source>
</evidence>
<evidence type="ECO:0000303" key="15">
    <source>
    </source>
</evidence>
<evidence type="ECO:0000303" key="16">
    <source>
    </source>
</evidence>
<evidence type="ECO:0000305" key="17"/>
<evidence type="ECO:0000312" key="18">
    <source>
        <dbReference type="HGNC" id="HGNC:24949"/>
    </source>
</evidence>
<evidence type="ECO:0007744" key="19">
    <source>
    </source>
</evidence>
<evidence type="ECO:0007744" key="20">
    <source>
    </source>
</evidence>
<evidence type="ECO:0007744" key="21">
    <source>
    </source>
</evidence>
<evidence type="ECO:0007744" key="22">
    <source>
    </source>
</evidence>
<evidence type="ECO:0007744" key="23">
    <source>
    </source>
</evidence>
<evidence type="ECO:0007744" key="24">
    <source>
    </source>
</evidence>
<evidence type="ECO:0007744" key="25">
    <source>
    </source>
</evidence>
<evidence type="ECO:0007744" key="26">
    <source>
    </source>
</evidence>
<evidence type="ECO:0007744" key="27">
    <source>
    </source>
</evidence>
<evidence type="ECO:0007744" key="28">
    <source>
    </source>
</evidence>
<gene>
    <name evidence="18" type="primary">OTUD4</name>
    <name evidence="15" type="synonym">HIN-1</name>
    <name evidence="13" type="synonym">KIAA1046</name>
</gene>